<gene>
    <name type="ordered locus">MRA_0290</name>
</gene>
<reference key="1">
    <citation type="journal article" date="2008" name="PLoS ONE">
        <title>Genetic basis of virulence attenuation revealed by comparative genomic analysis of Mycobacterium tuberculosis strain H37Ra versus H37Rv.</title>
        <authorList>
            <person name="Zheng H."/>
            <person name="Lu L."/>
            <person name="Wang B."/>
            <person name="Pu S."/>
            <person name="Zhang X."/>
            <person name="Zhu G."/>
            <person name="Shi W."/>
            <person name="Zhang L."/>
            <person name="Wang H."/>
            <person name="Wang S."/>
            <person name="Zhao G."/>
            <person name="Zhang Y."/>
        </authorList>
    </citation>
    <scope>NUCLEOTIDE SEQUENCE [LARGE SCALE GENOMIC DNA]</scope>
    <source>
        <strain>ATCC 25177 / H37Ra</strain>
    </source>
</reference>
<accession>A5TZ08</accession>
<name>Y290_MYCTA</name>
<proteinExistence type="inferred from homology"/>
<comment type="function">
    <text evidence="1">Exhibits S-adenosyl-L-methionine-dependent methyltransferase activity.</text>
</comment>
<comment type="similarity">
    <text evidence="2">Belongs to the UPF0677 family.</text>
</comment>
<evidence type="ECO:0000250" key="1"/>
<evidence type="ECO:0000305" key="2"/>
<feature type="chain" id="PRO_0000361226" description="Putative S-adenosyl-L-methionine-dependent methyltransferase MRA_0290">
    <location>
        <begin position="1"/>
        <end position="302"/>
    </location>
</feature>
<feature type="binding site" evidence="1">
    <location>
        <position position="126"/>
    </location>
    <ligand>
        <name>S-adenosyl-L-methionine</name>
        <dbReference type="ChEBI" id="CHEBI:59789"/>
    </ligand>
</feature>
<feature type="binding site" evidence="1">
    <location>
        <begin position="155"/>
        <end position="156"/>
    </location>
    <ligand>
        <name>S-adenosyl-L-methionine</name>
        <dbReference type="ChEBI" id="CHEBI:59789"/>
    </ligand>
</feature>
<sequence length="302" mass="32998">MRTEGDSWDITTSVGSTALFVATARALEAQKSDPLVVDPYAEAFCRAVGGSWADVLDGKLPDHKLKSTDFGEHFVNFQGARTKYFDEYFRRAAAAGARQVVILAAGLDSRAYRLPWPDGTTVFELDRPQVLDFKREVLASHGAQPRALRREIAVDLRDDWPQALRDSGFDAAAPSAWIAEGLLIYLPATAQERLFTGIDALAGRRSHVAVEDGAPMGPDEYAAKVEEERAAIAEGAEEHPFFQLVYNERCAPAAEWFGERGWTAVATLLNDYLEAVGRPVPGPESEAGPMFARNTLVSAARV</sequence>
<organism>
    <name type="scientific">Mycobacterium tuberculosis (strain ATCC 25177 / H37Ra)</name>
    <dbReference type="NCBI Taxonomy" id="419947"/>
    <lineage>
        <taxon>Bacteria</taxon>
        <taxon>Bacillati</taxon>
        <taxon>Actinomycetota</taxon>
        <taxon>Actinomycetes</taxon>
        <taxon>Mycobacteriales</taxon>
        <taxon>Mycobacteriaceae</taxon>
        <taxon>Mycobacterium</taxon>
        <taxon>Mycobacterium tuberculosis complex</taxon>
    </lineage>
</organism>
<protein>
    <recommendedName>
        <fullName>Putative S-adenosyl-L-methionine-dependent methyltransferase MRA_0290</fullName>
        <ecNumber>2.1.1.-</ecNumber>
    </recommendedName>
</protein>
<dbReference type="EC" id="2.1.1.-"/>
<dbReference type="EMBL" id="CP000611">
    <property type="protein sequence ID" value="ABQ72008.1"/>
    <property type="molecule type" value="Genomic_DNA"/>
</dbReference>
<dbReference type="RefSeq" id="WP_003401448.1">
    <property type="nucleotide sequence ID" value="NZ_CP016972.1"/>
</dbReference>
<dbReference type="SMR" id="A5TZ08"/>
<dbReference type="KEGG" id="mra:MRA_0290"/>
<dbReference type="eggNOG" id="COG3315">
    <property type="taxonomic scope" value="Bacteria"/>
</dbReference>
<dbReference type="HOGENOM" id="CLU_056160_2_1_11"/>
<dbReference type="Proteomes" id="UP000001988">
    <property type="component" value="Chromosome"/>
</dbReference>
<dbReference type="GO" id="GO:0008168">
    <property type="term" value="F:methyltransferase activity"/>
    <property type="evidence" value="ECO:0007669"/>
    <property type="project" value="UniProtKB-KW"/>
</dbReference>
<dbReference type="GO" id="GO:0032259">
    <property type="term" value="P:methylation"/>
    <property type="evidence" value="ECO:0007669"/>
    <property type="project" value="UniProtKB-KW"/>
</dbReference>
<dbReference type="FunFam" id="3.40.50.150:FF:000152">
    <property type="entry name" value="S-adenosyl-L-methionine-dependent methyltransferase"/>
    <property type="match status" value="1"/>
</dbReference>
<dbReference type="Gene3D" id="3.40.50.150">
    <property type="entry name" value="Vaccinia Virus protein VP39"/>
    <property type="match status" value="1"/>
</dbReference>
<dbReference type="InterPro" id="IPR007213">
    <property type="entry name" value="Ppm1/Ppm2/Tcmp"/>
</dbReference>
<dbReference type="InterPro" id="IPR029063">
    <property type="entry name" value="SAM-dependent_MTases_sf"/>
</dbReference>
<dbReference type="InterPro" id="IPR011610">
    <property type="entry name" value="SAM_mthyl_Trfase_ML2640-like"/>
</dbReference>
<dbReference type="NCBIfam" id="TIGR00027">
    <property type="entry name" value="mthyl_TIGR00027"/>
    <property type="match status" value="1"/>
</dbReference>
<dbReference type="PANTHER" id="PTHR43619">
    <property type="entry name" value="S-ADENOSYL-L-METHIONINE-DEPENDENT METHYLTRANSFERASE YKTD-RELATED"/>
    <property type="match status" value="1"/>
</dbReference>
<dbReference type="PANTHER" id="PTHR43619:SF2">
    <property type="entry name" value="S-ADENOSYL-L-METHIONINE-DEPENDENT METHYLTRANSFERASES SUPERFAMILY PROTEIN"/>
    <property type="match status" value="1"/>
</dbReference>
<dbReference type="Pfam" id="PF04072">
    <property type="entry name" value="LCM"/>
    <property type="match status" value="1"/>
</dbReference>
<dbReference type="SUPFAM" id="SSF53335">
    <property type="entry name" value="S-adenosyl-L-methionine-dependent methyltransferases"/>
    <property type="match status" value="1"/>
</dbReference>
<keyword id="KW-0489">Methyltransferase</keyword>
<keyword id="KW-1185">Reference proteome</keyword>
<keyword id="KW-0949">S-adenosyl-L-methionine</keyword>
<keyword id="KW-0808">Transferase</keyword>